<sequence>MAATAREDGVRNLAQGPRGCEHYDRACLLKAPCCDKLYTCRLCHDTNEDHQLDRFKVKEVQCINCEKLQHAQQTCEDCSTLFGEYYCSICHLFDKDKRQYHCESCGICRIGPKEDFFHCLKCNLCLTTNLRGKHKCIENVSRQNCPICLEDIHTSRVVAHVLPCGHLLHRTCYEEMLKEGYRCPLCMHSALDMTRYWRQLDTEVAQTPMPSEYQNVTVDILCNDCNGRSTVQFHILGMKCKLCDSYNTAQAGGRRVPVDQQ</sequence>
<reference key="1">
    <citation type="submission" date="2000-03" db="EMBL/GenBank/DDBJ databases">
        <authorList>
            <person name="Beitel L.K."/>
            <person name="Lumbroso R."/>
            <person name="Panet-Raymond V."/>
            <person name="de Tourreil A.S."/>
            <person name="Pinsky L."/>
            <person name="Trifiro M.A."/>
        </authorList>
    </citation>
    <scope>NUCLEOTIDE SEQUENCE [MRNA]</scope>
</reference>
<reference key="2">
    <citation type="submission" date="2000-06" db="EMBL/GenBank/DDBJ databases">
        <title>Identification of PLAG1 interacting proteins.</title>
        <authorList>
            <person name="Braem C.V."/>
            <person name="Kas K."/>
        </authorList>
    </citation>
    <scope>NUCLEOTIDE SEQUENCE [MRNA]</scope>
</reference>
<reference key="3">
    <citation type="submission" date="2000-09" db="EMBL/GenBank/DDBJ databases">
        <title>A novel mouse zinc-finger protein.</title>
        <authorList>
            <person name="Wu H.-S."/>
            <person name="Chou C.-M."/>
            <person name="Leu J.-H."/>
            <person name="Huang C.-J."/>
        </authorList>
    </citation>
    <scope>NUCLEOTIDE SEQUENCE [MRNA]</scope>
    <source>
        <strain>C57BL/6J</strain>
    </source>
</reference>
<reference key="4">
    <citation type="journal article" date="2005" name="Science">
        <title>The transcriptional landscape of the mammalian genome.</title>
        <authorList>
            <person name="Carninci P."/>
            <person name="Kasukawa T."/>
            <person name="Katayama S."/>
            <person name="Gough J."/>
            <person name="Frith M.C."/>
            <person name="Maeda N."/>
            <person name="Oyama R."/>
            <person name="Ravasi T."/>
            <person name="Lenhard B."/>
            <person name="Wells C."/>
            <person name="Kodzius R."/>
            <person name="Shimokawa K."/>
            <person name="Bajic V.B."/>
            <person name="Brenner S.E."/>
            <person name="Batalov S."/>
            <person name="Forrest A.R."/>
            <person name="Zavolan M."/>
            <person name="Davis M.J."/>
            <person name="Wilming L.G."/>
            <person name="Aidinis V."/>
            <person name="Allen J.E."/>
            <person name="Ambesi-Impiombato A."/>
            <person name="Apweiler R."/>
            <person name="Aturaliya R.N."/>
            <person name="Bailey T.L."/>
            <person name="Bansal M."/>
            <person name="Baxter L."/>
            <person name="Beisel K.W."/>
            <person name="Bersano T."/>
            <person name="Bono H."/>
            <person name="Chalk A.M."/>
            <person name="Chiu K.P."/>
            <person name="Choudhary V."/>
            <person name="Christoffels A."/>
            <person name="Clutterbuck D.R."/>
            <person name="Crowe M.L."/>
            <person name="Dalla E."/>
            <person name="Dalrymple B.P."/>
            <person name="de Bono B."/>
            <person name="Della Gatta G."/>
            <person name="di Bernardo D."/>
            <person name="Down T."/>
            <person name="Engstrom P."/>
            <person name="Fagiolini M."/>
            <person name="Faulkner G."/>
            <person name="Fletcher C.F."/>
            <person name="Fukushima T."/>
            <person name="Furuno M."/>
            <person name="Futaki S."/>
            <person name="Gariboldi M."/>
            <person name="Georgii-Hemming P."/>
            <person name="Gingeras T.R."/>
            <person name="Gojobori T."/>
            <person name="Green R.E."/>
            <person name="Gustincich S."/>
            <person name="Harbers M."/>
            <person name="Hayashi Y."/>
            <person name="Hensch T.K."/>
            <person name="Hirokawa N."/>
            <person name="Hill D."/>
            <person name="Huminiecki L."/>
            <person name="Iacono M."/>
            <person name="Ikeo K."/>
            <person name="Iwama A."/>
            <person name="Ishikawa T."/>
            <person name="Jakt M."/>
            <person name="Kanapin A."/>
            <person name="Katoh M."/>
            <person name="Kawasawa Y."/>
            <person name="Kelso J."/>
            <person name="Kitamura H."/>
            <person name="Kitano H."/>
            <person name="Kollias G."/>
            <person name="Krishnan S.P."/>
            <person name="Kruger A."/>
            <person name="Kummerfeld S.K."/>
            <person name="Kurochkin I.V."/>
            <person name="Lareau L.F."/>
            <person name="Lazarevic D."/>
            <person name="Lipovich L."/>
            <person name="Liu J."/>
            <person name="Liuni S."/>
            <person name="McWilliam S."/>
            <person name="Madan Babu M."/>
            <person name="Madera M."/>
            <person name="Marchionni L."/>
            <person name="Matsuda H."/>
            <person name="Matsuzawa S."/>
            <person name="Miki H."/>
            <person name="Mignone F."/>
            <person name="Miyake S."/>
            <person name="Morris K."/>
            <person name="Mottagui-Tabar S."/>
            <person name="Mulder N."/>
            <person name="Nakano N."/>
            <person name="Nakauchi H."/>
            <person name="Ng P."/>
            <person name="Nilsson R."/>
            <person name="Nishiguchi S."/>
            <person name="Nishikawa S."/>
            <person name="Nori F."/>
            <person name="Ohara O."/>
            <person name="Okazaki Y."/>
            <person name="Orlando V."/>
            <person name="Pang K.C."/>
            <person name="Pavan W.J."/>
            <person name="Pavesi G."/>
            <person name="Pesole G."/>
            <person name="Petrovsky N."/>
            <person name="Piazza S."/>
            <person name="Reed J."/>
            <person name="Reid J.F."/>
            <person name="Ring B.Z."/>
            <person name="Ringwald M."/>
            <person name="Rost B."/>
            <person name="Ruan Y."/>
            <person name="Salzberg S.L."/>
            <person name="Sandelin A."/>
            <person name="Schneider C."/>
            <person name="Schoenbach C."/>
            <person name="Sekiguchi K."/>
            <person name="Semple C.A."/>
            <person name="Seno S."/>
            <person name="Sessa L."/>
            <person name="Sheng Y."/>
            <person name="Shibata Y."/>
            <person name="Shimada H."/>
            <person name="Shimada K."/>
            <person name="Silva D."/>
            <person name="Sinclair B."/>
            <person name="Sperling S."/>
            <person name="Stupka E."/>
            <person name="Sugiura K."/>
            <person name="Sultana R."/>
            <person name="Takenaka Y."/>
            <person name="Taki K."/>
            <person name="Tammoja K."/>
            <person name="Tan S.L."/>
            <person name="Tang S."/>
            <person name="Taylor M.S."/>
            <person name="Tegner J."/>
            <person name="Teichmann S.A."/>
            <person name="Ueda H.R."/>
            <person name="van Nimwegen E."/>
            <person name="Verardo R."/>
            <person name="Wei C.L."/>
            <person name="Yagi K."/>
            <person name="Yamanishi H."/>
            <person name="Zabarovsky E."/>
            <person name="Zhu S."/>
            <person name="Zimmer A."/>
            <person name="Hide W."/>
            <person name="Bult C."/>
            <person name="Grimmond S.M."/>
            <person name="Teasdale R.D."/>
            <person name="Liu E.T."/>
            <person name="Brusic V."/>
            <person name="Quackenbush J."/>
            <person name="Wahlestedt C."/>
            <person name="Mattick J.S."/>
            <person name="Hume D.A."/>
            <person name="Kai C."/>
            <person name="Sasaki D."/>
            <person name="Tomaru Y."/>
            <person name="Fukuda S."/>
            <person name="Kanamori-Katayama M."/>
            <person name="Suzuki M."/>
            <person name="Aoki J."/>
            <person name="Arakawa T."/>
            <person name="Iida J."/>
            <person name="Imamura K."/>
            <person name="Itoh M."/>
            <person name="Kato T."/>
            <person name="Kawaji H."/>
            <person name="Kawagashira N."/>
            <person name="Kawashima T."/>
            <person name="Kojima M."/>
            <person name="Kondo S."/>
            <person name="Konno H."/>
            <person name="Nakano K."/>
            <person name="Ninomiya N."/>
            <person name="Nishio T."/>
            <person name="Okada M."/>
            <person name="Plessy C."/>
            <person name="Shibata K."/>
            <person name="Shiraki T."/>
            <person name="Suzuki S."/>
            <person name="Tagami M."/>
            <person name="Waki K."/>
            <person name="Watahiki A."/>
            <person name="Okamura-Oho Y."/>
            <person name="Suzuki H."/>
            <person name="Kawai J."/>
            <person name="Hayashizaki Y."/>
        </authorList>
    </citation>
    <scope>NUCLEOTIDE SEQUENCE [LARGE SCALE MRNA]</scope>
    <source>
        <strain>C57BL/6J</strain>
        <tissue>Colon</tissue>
        <tissue>Egg</tissue>
    </source>
</reference>
<reference key="5">
    <citation type="journal article" date="2004" name="Genome Res.">
        <title>The status, quality, and expansion of the NIH full-length cDNA project: the Mammalian Gene Collection (MGC).</title>
        <authorList>
            <consortium name="The MGC Project Team"/>
        </authorList>
    </citation>
    <scope>NUCLEOTIDE SEQUENCE [LARGE SCALE MRNA]</scope>
    <source>
        <strain>C57BL/6J</strain>
        <tissue>Mammary tumor</tissue>
    </source>
</reference>
<reference key="6">
    <citation type="journal article" date="2003" name="Cell">
        <title>Pirh2, a p53-induced ubiquitin-protein ligase, promotes p53 degradation.</title>
        <authorList>
            <person name="Leng R.P."/>
            <person name="Lin Y."/>
            <person name="Ma W."/>
            <person name="Wu H."/>
            <person name="Lemmers B."/>
            <person name="Chung S."/>
            <person name="Parant J.M."/>
            <person name="Lozano G."/>
            <person name="Hakem R."/>
            <person name="Benchimol S."/>
        </authorList>
    </citation>
    <scope>FUNCTION</scope>
    <scope>INDUCTION</scope>
    <scope>TISSUE SPECIFICITY</scope>
</reference>
<reference key="7">
    <citation type="journal article" date="2010" name="Cell">
        <title>A tissue-specific atlas of mouse protein phosphorylation and expression.</title>
        <authorList>
            <person name="Huttlin E.L."/>
            <person name="Jedrychowski M.P."/>
            <person name="Elias J.E."/>
            <person name="Goswami T."/>
            <person name="Rad R."/>
            <person name="Beausoleil S.A."/>
            <person name="Villen J."/>
            <person name="Haas W."/>
            <person name="Sowa M.E."/>
            <person name="Gygi S.P."/>
        </authorList>
    </citation>
    <scope>IDENTIFICATION BY MASS SPECTROMETRY [LARGE SCALE ANALYSIS]</scope>
    <source>
        <tissue>Pancreas</tissue>
    </source>
</reference>
<reference key="8">
    <citation type="submission" date="2007-08" db="PDB data bank">
        <title>Solution structure of the CHY zinc finger domain and of the RING domain of the RING finger and CHY zinc finger domain-containing protein 1 from Mus musculus.</title>
        <authorList>
            <consortium name="RIKEN structural genomics initiative (RSGI)"/>
        </authorList>
    </citation>
    <scope>STRUCTURE BY NMR OF 9-186</scope>
</reference>
<evidence type="ECO:0000250" key="1">
    <source>
        <dbReference type="UniProtKB" id="Q96PM5"/>
    </source>
</evidence>
<evidence type="ECO:0000255" key="2">
    <source>
        <dbReference type="PROSITE-ProRule" id="PRU00175"/>
    </source>
</evidence>
<evidence type="ECO:0000255" key="3">
    <source>
        <dbReference type="PROSITE-ProRule" id="PRU00601"/>
    </source>
</evidence>
<evidence type="ECO:0000255" key="4">
    <source>
        <dbReference type="PROSITE-ProRule" id="PRU00965"/>
    </source>
</evidence>
<evidence type="ECO:0000269" key="5">
    <source>
    </source>
</evidence>
<evidence type="ECO:0007829" key="6">
    <source>
        <dbReference type="PDB" id="2DKT"/>
    </source>
</evidence>
<evidence type="ECO:0007829" key="7">
    <source>
        <dbReference type="PDB" id="2ECM"/>
    </source>
</evidence>
<dbReference type="EC" id="2.3.2.27" evidence="1"/>
<dbReference type="EMBL" id="AF071222">
    <property type="protein sequence ID" value="AAL75940.1"/>
    <property type="molecule type" value="mRNA"/>
</dbReference>
<dbReference type="EMBL" id="AF276959">
    <property type="protein sequence ID" value="AAK96899.1"/>
    <property type="molecule type" value="mRNA"/>
</dbReference>
<dbReference type="EMBL" id="AF305423">
    <property type="protein sequence ID" value="AAL09355.1"/>
    <property type="molecule type" value="mRNA"/>
</dbReference>
<dbReference type="EMBL" id="AK018364">
    <property type="protein sequence ID" value="BAB31179.1"/>
    <property type="molecule type" value="mRNA"/>
</dbReference>
<dbReference type="EMBL" id="AK018488">
    <property type="protein sequence ID" value="BAB31236.1"/>
    <property type="molecule type" value="mRNA"/>
</dbReference>
<dbReference type="EMBL" id="AK078397">
    <property type="protein sequence ID" value="BAC37254.1"/>
    <property type="molecule type" value="mRNA"/>
</dbReference>
<dbReference type="EMBL" id="BC057143">
    <property type="protein sequence ID" value="AAH57143.1"/>
    <property type="molecule type" value="mRNA"/>
</dbReference>
<dbReference type="CCDS" id="CCDS19424.1"/>
<dbReference type="RefSeq" id="NP_001258726.1">
    <property type="nucleotide sequence ID" value="NM_001271797.1"/>
</dbReference>
<dbReference type="RefSeq" id="NP_080833.1">
    <property type="nucleotide sequence ID" value="NM_026557.5"/>
</dbReference>
<dbReference type="PDB" id="2DKT">
    <property type="method" value="NMR"/>
    <property type="chains" value="A=9-138"/>
</dbReference>
<dbReference type="PDB" id="2ECM">
    <property type="method" value="NMR"/>
    <property type="chains" value="A=145-186"/>
</dbReference>
<dbReference type="PDBsum" id="2DKT"/>
<dbReference type="PDBsum" id="2ECM"/>
<dbReference type="BMRB" id="Q9CR50"/>
<dbReference type="SMR" id="Q9CR50"/>
<dbReference type="BioGRID" id="212655">
    <property type="interactions" value="7"/>
</dbReference>
<dbReference type="FunCoup" id="Q9CR50">
    <property type="interactions" value="3797"/>
</dbReference>
<dbReference type="STRING" id="10090.ENSMUSP00000031345"/>
<dbReference type="PhosphoSitePlus" id="Q9CR50"/>
<dbReference type="PaxDb" id="10090-ENSMUSP00000031345"/>
<dbReference type="PeptideAtlas" id="Q9CR50"/>
<dbReference type="ProteomicsDB" id="302081"/>
<dbReference type="Pumba" id="Q9CR50"/>
<dbReference type="Antibodypedia" id="24650">
    <property type="antibodies" value="198 antibodies from 35 providers"/>
</dbReference>
<dbReference type="Ensembl" id="ENSMUST00000031345.15">
    <property type="protein sequence ID" value="ENSMUSP00000031345.9"/>
    <property type="gene ID" value="ENSMUSG00000029397.16"/>
</dbReference>
<dbReference type="GeneID" id="68098"/>
<dbReference type="KEGG" id="mmu:68098"/>
<dbReference type="UCSC" id="uc008yby.2">
    <property type="organism name" value="mouse"/>
</dbReference>
<dbReference type="AGR" id="MGI:1915348"/>
<dbReference type="CTD" id="25898"/>
<dbReference type="MGI" id="MGI:1915348">
    <property type="gene designation" value="Rchy1"/>
</dbReference>
<dbReference type="VEuPathDB" id="HostDB:ENSMUSG00000029397"/>
<dbReference type="eggNOG" id="KOG1940">
    <property type="taxonomic scope" value="Eukaryota"/>
</dbReference>
<dbReference type="GeneTree" id="ENSGT00390000008853"/>
<dbReference type="HOGENOM" id="CLU_013368_1_0_1"/>
<dbReference type="InParanoid" id="Q9CR50"/>
<dbReference type="OMA" id="KLYPCRL"/>
<dbReference type="OrthoDB" id="411372at2759"/>
<dbReference type="PhylomeDB" id="Q9CR50"/>
<dbReference type="TreeFam" id="TF323762"/>
<dbReference type="Reactome" id="R-MMU-110320">
    <property type="pathway name" value="Translesion Synthesis by POLH"/>
</dbReference>
<dbReference type="Reactome" id="R-MMU-983168">
    <property type="pathway name" value="Antigen processing: Ubiquitination &amp; Proteasome degradation"/>
</dbReference>
<dbReference type="UniPathway" id="UPA00143"/>
<dbReference type="BioGRID-ORCS" id="68098">
    <property type="hits" value="0 hits in 78 CRISPR screens"/>
</dbReference>
<dbReference type="ChiTaRS" id="Rchy1">
    <property type="organism name" value="mouse"/>
</dbReference>
<dbReference type="EvolutionaryTrace" id="Q9CR50"/>
<dbReference type="PRO" id="PR:Q9CR50"/>
<dbReference type="Proteomes" id="UP000000589">
    <property type="component" value="Chromosome 5"/>
</dbReference>
<dbReference type="RNAct" id="Q9CR50">
    <property type="molecule type" value="protein"/>
</dbReference>
<dbReference type="Bgee" id="ENSMUSG00000029397">
    <property type="expression patterns" value="Expressed in interventricular septum and 250 other cell types or tissues"/>
</dbReference>
<dbReference type="ExpressionAtlas" id="Q9CR50">
    <property type="expression patterns" value="baseline and differential"/>
</dbReference>
<dbReference type="GO" id="GO:0005829">
    <property type="term" value="C:cytosol"/>
    <property type="evidence" value="ECO:0007669"/>
    <property type="project" value="Ensembl"/>
</dbReference>
<dbReference type="GO" id="GO:0016607">
    <property type="term" value="C:nuclear speck"/>
    <property type="evidence" value="ECO:0007669"/>
    <property type="project" value="UniProtKB-SubCell"/>
</dbReference>
<dbReference type="GO" id="GO:0005634">
    <property type="term" value="C:nucleus"/>
    <property type="evidence" value="ECO:0000250"/>
    <property type="project" value="UniProtKB"/>
</dbReference>
<dbReference type="GO" id="GO:0000151">
    <property type="term" value="C:ubiquitin ligase complex"/>
    <property type="evidence" value="ECO:0000250"/>
    <property type="project" value="UniProtKB"/>
</dbReference>
<dbReference type="GO" id="GO:0002039">
    <property type="term" value="F:p53 binding"/>
    <property type="evidence" value="ECO:0007669"/>
    <property type="project" value="Ensembl"/>
</dbReference>
<dbReference type="GO" id="GO:0042803">
    <property type="term" value="F:protein homodimerization activity"/>
    <property type="evidence" value="ECO:0007669"/>
    <property type="project" value="Ensembl"/>
</dbReference>
<dbReference type="GO" id="GO:0061630">
    <property type="term" value="F:ubiquitin protein ligase activity"/>
    <property type="evidence" value="ECO:0000250"/>
    <property type="project" value="UniProtKB"/>
</dbReference>
<dbReference type="GO" id="GO:0008270">
    <property type="term" value="F:zinc ion binding"/>
    <property type="evidence" value="ECO:0007669"/>
    <property type="project" value="UniProtKB-KW"/>
</dbReference>
<dbReference type="GO" id="GO:0032436">
    <property type="term" value="P:positive regulation of proteasomal ubiquitin-dependent protein catabolic process"/>
    <property type="evidence" value="ECO:0000250"/>
    <property type="project" value="UniProtKB"/>
</dbReference>
<dbReference type="GO" id="GO:0031398">
    <property type="term" value="P:positive regulation of protein ubiquitination"/>
    <property type="evidence" value="ECO:0000250"/>
    <property type="project" value="UniProtKB"/>
</dbReference>
<dbReference type="GO" id="GO:0051865">
    <property type="term" value="P:protein autoubiquitination"/>
    <property type="evidence" value="ECO:0000250"/>
    <property type="project" value="UniProtKB"/>
</dbReference>
<dbReference type="GO" id="GO:0016567">
    <property type="term" value="P:protein ubiquitination"/>
    <property type="evidence" value="ECO:0000250"/>
    <property type="project" value="UniProtKB"/>
</dbReference>
<dbReference type="GO" id="GO:0072344">
    <property type="term" value="P:rescue of stalled ribosome"/>
    <property type="evidence" value="ECO:0000250"/>
    <property type="project" value="UniProtKB"/>
</dbReference>
<dbReference type="GO" id="GO:0006511">
    <property type="term" value="P:ubiquitin-dependent protein catabolic process"/>
    <property type="evidence" value="ECO:0000250"/>
    <property type="project" value="UniProtKB"/>
</dbReference>
<dbReference type="CDD" id="cd16464">
    <property type="entry name" value="RING-H2_Pirh2-like"/>
    <property type="match status" value="1"/>
</dbReference>
<dbReference type="FunFam" id="2.20.28.10:FF:000009">
    <property type="entry name" value="RING finger and CHY zinc finger domain-containing protein 1"/>
    <property type="match status" value="1"/>
</dbReference>
<dbReference type="FunFam" id="3.30.40.10:FF:000188">
    <property type="entry name" value="RING finger and CHY zinc finger domain-containing protein 1"/>
    <property type="match status" value="1"/>
</dbReference>
<dbReference type="Gene3D" id="2.20.28.10">
    <property type="match status" value="1"/>
</dbReference>
<dbReference type="Gene3D" id="3.30.40.10">
    <property type="entry name" value="Zinc/RING finger domain, C3HC4 (zinc finger)"/>
    <property type="match status" value="1"/>
</dbReference>
<dbReference type="InterPro" id="IPR039512">
    <property type="entry name" value="RCHY1_zinc-ribbon"/>
</dbReference>
<dbReference type="InterPro" id="IPR008913">
    <property type="entry name" value="Znf_CHY"/>
</dbReference>
<dbReference type="InterPro" id="IPR037274">
    <property type="entry name" value="Znf_CHY_sf"/>
</dbReference>
<dbReference type="InterPro" id="IPR017921">
    <property type="entry name" value="Znf_CTCHY"/>
</dbReference>
<dbReference type="InterPro" id="IPR037275">
    <property type="entry name" value="Znf_CTCHY_sf"/>
</dbReference>
<dbReference type="InterPro" id="IPR001841">
    <property type="entry name" value="Znf_RING"/>
</dbReference>
<dbReference type="InterPro" id="IPR013083">
    <property type="entry name" value="Znf_RING/FYVE/PHD"/>
</dbReference>
<dbReference type="PANTHER" id="PTHR21319">
    <property type="entry name" value="RING FINGER AND CHY ZINC FINGER DOMAIN-CONTAINING PROTEIN 1"/>
    <property type="match status" value="1"/>
</dbReference>
<dbReference type="PANTHER" id="PTHR21319:SF53">
    <property type="entry name" value="RING FINGER AND CHY ZINC FINGER DOMAIN-CONTAINING PROTEIN 1"/>
    <property type="match status" value="1"/>
</dbReference>
<dbReference type="Pfam" id="PF05495">
    <property type="entry name" value="zf-CHY"/>
    <property type="match status" value="1"/>
</dbReference>
<dbReference type="Pfam" id="PF13639">
    <property type="entry name" value="zf-RING_2"/>
    <property type="match status" value="1"/>
</dbReference>
<dbReference type="Pfam" id="PF14599">
    <property type="entry name" value="zinc_ribbon_6"/>
    <property type="match status" value="1"/>
</dbReference>
<dbReference type="SMART" id="SM00184">
    <property type="entry name" value="RING"/>
    <property type="match status" value="1"/>
</dbReference>
<dbReference type="SUPFAM" id="SSF161219">
    <property type="entry name" value="CHY zinc finger-like"/>
    <property type="match status" value="1"/>
</dbReference>
<dbReference type="SUPFAM" id="SSF57850">
    <property type="entry name" value="RING/U-box"/>
    <property type="match status" value="1"/>
</dbReference>
<dbReference type="SUPFAM" id="SSF161245">
    <property type="entry name" value="Zinc hairpin stack"/>
    <property type="match status" value="1"/>
</dbReference>
<dbReference type="PROSITE" id="PS51266">
    <property type="entry name" value="ZF_CHY"/>
    <property type="match status" value="1"/>
</dbReference>
<dbReference type="PROSITE" id="PS51270">
    <property type="entry name" value="ZF_CTCHY"/>
    <property type="match status" value="1"/>
</dbReference>
<dbReference type="PROSITE" id="PS50089">
    <property type="entry name" value="ZF_RING_2"/>
    <property type="match status" value="1"/>
</dbReference>
<comment type="function">
    <text evidence="1 5">E3 ubiquitin-protein ligase that mediates ubiquitination of target proteins, including p53/TP53, TP73, HDAC1 and CDKN1B (By similarity). Mediates ubiquitination and degradation of p53/TP53; preferentially acts on tetrameric p53/TP53 (By similarity). Catalyzes monoubiquitinates the translesion DNA polymerase POLH (PubMed:12654245). Involved in the ribosome-associated quality control (RQC) pathway, which mediates the extraction of incompletely synthesized nascent chains from stalled ribosomes: RCHY1 acts downstream of NEMF and recognizes CAT tails associated with stalled nascent chains, leading to their ubiquitination and degradation (By similarity).</text>
</comment>
<comment type="catalytic activity">
    <reaction evidence="1">
        <text>S-ubiquitinyl-[E2 ubiquitin-conjugating enzyme]-L-cysteine + [acceptor protein]-L-lysine = [E2 ubiquitin-conjugating enzyme]-L-cysteine + N(6)-ubiquitinyl-[acceptor protein]-L-lysine.</text>
        <dbReference type="EC" id="2.3.2.27"/>
    </reaction>
</comment>
<comment type="pathway">
    <text evidence="1">Protein modification; protein ubiquitination.</text>
</comment>
<comment type="subunit">
    <text evidence="1">Monomer and homodimer. Interacts with AR, MDM2, KAT5, PLAG1, PLAGL2, COPE, UBE2D2 and GORAB/NTKLBP1.</text>
</comment>
<comment type="subcellular location">
    <subcellularLocation>
        <location evidence="1">Nucleus</location>
    </subcellularLocation>
    <subcellularLocation>
        <location evidence="1">Nucleus speckle</location>
    </subcellularLocation>
    <subcellularLocation>
        <location evidence="1">Cytoplasm</location>
    </subcellularLocation>
</comment>
<comment type="tissue specificity">
    <text evidence="5">Detected in testis, liver, kidney and heart.</text>
</comment>
<comment type="induction">
    <text evidence="5">Up-regulated upon p53/TP53 activation.</text>
</comment>
<comment type="PTM">
    <text evidence="1">Subject to ubiquitination and proteasomal degradation. Interaction with PLAGL2 or KAT5 enhances protein stability.</text>
</comment>
<gene>
    <name type="primary">Rchy1</name>
    <name type="synonym">Arnip</name>
    <name type="synonym">Chimp</name>
    <name type="synonym">Zfp363</name>
    <name type="synonym">Znf363</name>
</gene>
<keyword id="KW-0002">3D-structure</keyword>
<keyword id="KW-0963">Cytoplasm</keyword>
<keyword id="KW-0479">Metal-binding</keyword>
<keyword id="KW-0539">Nucleus</keyword>
<keyword id="KW-1185">Reference proteome</keyword>
<keyword id="KW-0808">Transferase</keyword>
<keyword id="KW-0832">Ubl conjugation</keyword>
<keyword id="KW-0833">Ubl conjugation pathway</keyword>
<keyword id="KW-0862">Zinc</keyword>
<keyword id="KW-0863">Zinc-finger</keyword>
<name>ZN363_MOUSE</name>
<protein>
    <recommendedName>
        <fullName>RING finger and CHY zinc finger domain-containing protein 1</fullName>
        <ecNumber evidence="1">2.3.2.27</ecNumber>
    </recommendedName>
    <alternativeName>
        <fullName>Androgen receptor N-terminal-interacting protein</fullName>
    </alternativeName>
    <alternativeName>
        <fullName>CH-rich-interacting match with PLAG1</fullName>
    </alternativeName>
    <alternativeName>
        <fullName>E3 ubiquitin-protein ligase Pirh2</fullName>
    </alternativeName>
    <alternativeName>
        <fullName>RING-type E3 ubiquitin transferase RCHY1</fullName>
    </alternativeName>
    <alternativeName>
        <fullName>Zinc finger protein 363</fullName>
    </alternativeName>
</protein>
<proteinExistence type="evidence at protein level"/>
<feature type="chain" id="PRO_0000056313" description="RING finger and CHY zinc finger domain-containing protein 1">
    <location>
        <begin position="1"/>
        <end position="261"/>
    </location>
</feature>
<feature type="zinc finger region" description="CHY-type" evidence="3">
    <location>
        <begin position="13"/>
        <end position="80"/>
    </location>
</feature>
<feature type="zinc finger region" description="CTCHY-type" evidence="4">
    <location>
        <begin position="82"/>
        <end position="144"/>
    </location>
</feature>
<feature type="zinc finger region" description="RING-type" evidence="2">
    <location>
        <begin position="145"/>
        <end position="189"/>
    </location>
</feature>
<feature type="binding site" evidence="3">
    <location>
        <position position="20"/>
    </location>
    <ligand>
        <name>Zn(2+)</name>
        <dbReference type="ChEBI" id="CHEBI:29105"/>
        <label>1</label>
    </ligand>
</feature>
<feature type="binding site" evidence="3">
    <location>
        <position position="22"/>
    </location>
    <ligand>
        <name>Zn(2+)</name>
        <dbReference type="ChEBI" id="CHEBI:29105"/>
        <label>1</label>
    </ligand>
</feature>
<feature type="binding site" evidence="3">
    <location>
        <position position="33"/>
    </location>
    <ligand>
        <name>Zn(2+)</name>
        <dbReference type="ChEBI" id="CHEBI:29105"/>
        <label>2</label>
    </ligand>
</feature>
<feature type="binding site" evidence="3">
    <location>
        <position position="34"/>
    </location>
    <ligand>
        <name>Zn(2+)</name>
        <dbReference type="ChEBI" id="CHEBI:29105"/>
        <label>2</label>
    </ligand>
</feature>
<feature type="binding site" evidence="3">
    <location>
        <position position="40"/>
    </location>
    <ligand>
        <name>Zn(2+)</name>
        <dbReference type="ChEBI" id="CHEBI:29105"/>
        <label>1</label>
    </ligand>
</feature>
<feature type="binding site" evidence="3">
    <location>
        <position position="43"/>
    </location>
    <ligand>
        <name>Zn(2+)</name>
        <dbReference type="ChEBI" id="CHEBI:29105"/>
        <label>1</label>
    </ligand>
</feature>
<feature type="binding site" evidence="3">
    <location>
        <position position="44"/>
    </location>
    <ligand>
        <name>Zn(2+)</name>
        <dbReference type="ChEBI" id="CHEBI:29105"/>
        <label>2</label>
    </ligand>
</feature>
<feature type="binding site" evidence="3">
    <location>
        <position position="50"/>
    </location>
    <ligand>
        <name>Zn(2+)</name>
        <dbReference type="ChEBI" id="CHEBI:29105"/>
        <label>2</label>
    </ligand>
</feature>
<feature type="binding site" evidence="3">
    <location>
        <position position="62"/>
    </location>
    <ligand>
        <name>Zn(2+)</name>
        <dbReference type="ChEBI" id="CHEBI:29105"/>
        <label>3</label>
    </ligand>
</feature>
<feature type="binding site" evidence="3">
    <location>
        <position position="65"/>
    </location>
    <ligand>
        <name>Zn(2+)</name>
        <dbReference type="ChEBI" id="CHEBI:29105"/>
        <label>3</label>
    </ligand>
</feature>
<feature type="binding site" evidence="3">
    <location>
        <position position="75"/>
    </location>
    <ligand>
        <name>Zn(2+)</name>
        <dbReference type="ChEBI" id="CHEBI:29105"/>
        <label>3</label>
    </ligand>
</feature>
<feature type="binding site" evidence="3">
    <location>
        <position position="78"/>
    </location>
    <ligand>
        <name>Zn(2+)</name>
        <dbReference type="ChEBI" id="CHEBI:29105"/>
        <label>3</label>
    </ligand>
</feature>
<feature type="binding site" evidence="4">
    <location>
        <position position="87"/>
    </location>
    <ligand>
        <name>Zn(2+)</name>
        <dbReference type="ChEBI" id="CHEBI:29105"/>
        <label>4</label>
    </ligand>
</feature>
<feature type="binding site" evidence="4">
    <location>
        <position position="90"/>
    </location>
    <ligand>
        <name>Zn(2+)</name>
        <dbReference type="ChEBI" id="CHEBI:29105"/>
        <label>4</label>
    </ligand>
</feature>
<feature type="binding site" evidence="4">
    <location>
        <position position="101"/>
    </location>
    <ligand>
        <name>Zn(2+)</name>
        <dbReference type="ChEBI" id="CHEBI:29105"/>
        <label>4</label>
    </ligand>
</feature>
<feature type="binding site" evidence="4">
    <location>
        <position position="102"/>
    </location>
    <ligand>
        <name>Zn(2+)</name>
        <dbReference type="ChEBI" id="CHEBI:29105"/>
        <label>5</label>
    </ligand>
</feature>
<feature type="binding site" evidence="4">
    <location>
        <position position="105"/>
    </location>
    <ligand>
        <name>Zn(2+)</name>
        <dbReference type="ChEBI" id="CHEBI:29105"/>
        <label>5</label>
    </ligand>
</feature>
<feature type="binding site" evidence="4">
    <location>
        <position position="108"/>
    </location>
    <ligand>
        <name>Zn(2+)</name>
        <dbReference type="ChEBI" id="CHEBI:29105"/>
        <label>4</label>
    </ligand>
</feature>
<feature type="binding site" evidence="4">
    <location>
        <position position="118"/>
    </location>
    <ligand>
        <name>Zn(2+)</name>
        <dbReference type="ChEBI" id="CHEBI:29105"/>
        <label>5</label>
    </ligand>
</feature>
<feature type="binding site" evidence="4">
    <location>
        <position position="119"/>
    </location>
    <ligand>
        <name>Zn(2+)</name>
        <dbReference type="ChEBI" id="CHEBI:29105"/>
        <label>6</label>
    </ligand>
</feature>
<feature type="binding site" evidence="4">
    <location>
        <position position="122"/>
    </location>
    <ligand>
        <name>Zn(2+)</name>
        <dbReference type="ChEBI" id="CHEBI:29105"/>
        <label>6</label>
    </ligand>
</feature>
<feature type="binding site" evidence="4">
    <location>
        <position position="125"/>
    </location>
    <ligand>
        <name>Zn(2+)</name>
        <dbReference type="ChEBI" id="CHEBI:29105"/>
        <label>5</label>
    </ligand>
</feature>
<feature type="binding site" evidence="4">
    <location>
        <position position="134"/>
    </location>
    <ligand>
        <name>Zn(2+)</name>
        <dbReference type="ChEBI" id="CHEBI:29105"/>
        <label>6</label>
    </ligand>
</feature>
<feature type="binding site" evidence="4">
    <location>
        <position position="136"/>
    </location>
    <ligand>
        <name>Zn(2+)</name>
        <dbReference type="ChEBI" id="CHEBI:29105"/>
        <label>6</label>
    </ligand>
</feature>
<feature type="strand" evidence="6">
    <location>
        <begin position="17"/>
        <end position="19"/>
    </location>
</feature>
<feature type="strand" evidence="6">
    <location>
        <begin position="26"/>
        <end position="31"/>
    </location>
</feature>
<feature type="turn" evidence="6">
    <location>
        <begin position="32"/>
        <end position="35"/>
    </location>
</feature>
<feature type="strand" evidence="6">
    <location>
        <begin position="36"/>
        <end position="40"/>
    </location>
</feature>
<feature type="helix" evidence="6">
    <location>
        <begin position="41"/>
        <end position="46"/>
    </location>
</feature>
<feature type="strand" evidence="6">
    <location>
        <begin position="48"/>
        <end position="50"/>
    </location>
</feature>
<feature type="strand" evidence="6">
    <location>
        <begin position="54"/>
        <end position="56"/>
    </location>
</feature>
<feature type="strand" evidence="6">
    <location>
        <begin position="60"/>
        <end position="65"/>
    </location>
</feature>
<feature type="strand" evidence="6">
    <location>
        <begin position="76"/>
        <end position="78"/>
    </location>
</feature>
<feature type="strand" evidence="6">
    <location>
        <begin position="84"/>
        <end position="86"/>
    </location>
</feature>
<feature type="strand" evidence="6">
    <location>
        <begin position="88"/>
        <end position="90"/>
    </location>
</feature>
<feature type="strand" evidence="6">
    <location>
        <begin position="96"/>
        <end position="102"/>
    </location>
</feature>
<feature type="turn" evidence="6">
    <location>
        <begin position="103"/>
        <end position="106"/>
    </location>
</feature>
<feature type="strand" evidence="6">
    <location>
        <begin position="107"/>
        <end position="111"/>
    </location>
</feature>
<feature type="helix" evidence="6">
    <location>
        <begin position="113"/>
        <end position="115"/>
    </location>
</feature>
<feature type="strand" evidence="6">
    <location>
        <begin position="116"/>
        <end position="119"/>
    </location>
</feature>
<feature type="turn" evidence="6">
    <location>
        <begin position="120"/>
        <end position="123"/>
    </location>
</feature>
<feature type="strand" evidence="6">
    <location>
        <begin position="124"/>
        <end position="127"/>
    </location>
</feature>
<feature type="helix" evidence="6">
    <location>
        <begin position="128"/>
        <end position="130"/>
    </location>
</feature>
<feature type="strand" evidence="6">
    <location>
        <begin position="131"/>
        <end position="134"/>
    </location>
</feature>
<feature type="turn" evidence="7">
    <location>
        <begin position="146"/>
        <end position="148"/>
    </location>
</feature>
<feature type="turn" evidence="7">
    <location>
        <begin position="154"/>
        <end position="156"/>
    </location>
</feature>
<feature type="strand" evidence="7">
    <location>
        <begin position="159"/>
        <end position="161"/>
    </location>
</feature>
<feature type="strand" evidence="7">
    <location>
        <begin position="167"/>
        <end position="169"/>
    </location>
</feature>
<feature type="helix" evidence="7">
    <location>
        <begin position="172"/>
        <end position="179"/>
    </location>
</feature>
<accession>Q9CR50</accession>
<accession>Q920H0</accession>
<organism>
    <name type="scientific">Mus musculus</name>
    <name type="common">Mouse</name>
    <dbReference type="NCBI Taxonomy" id="10090"/>
    <lineage>
        <taxon>Eukaryota</taxon>
        <taxon>Metazoa</taxon>
        <taxon>Chordata</taxon>
        <taxon>Craniata</taxon>
        <taxon>Vertebrata</taxon>
        <taxon>Euteleostomi</taxon>
        <taxon>Mammalia</taxon>
        <taxon>Eutheria</taxon>
        <taxon>Euarchontoglires</taxon>
        <taxon>Glires</taxon>
        <taxon>Rodentia</taxon>
        <taxon>Myomorpha</taxon>
        <taxon>Muroidea</taxon>
        <taxon>Muridae</taxon>
        <taxon>Murinae</taxon>
        <taxon>Mus</taxon>
        <taxon>Mus</taxon>
    </lineage>
</organism>